<sequence>MSLASSLESLRKIDINDLDLNNIGSWPAAVKVIVCVLLTAAVLALGYNFHLSDMQAQLEQQAAEEETLKQQFSTKAFQAANLEAYKAQMKEMEESFGALLRQLPSDTEVPGLLEDITRTGLGSGLEFEEIKLLPEVAQQFYIELPIQISVVGGYHDLATFVSGVSSLPRIVTLHDFEIKPVAPGSTSKLRMSILAKTYRYNDKGLKK</sequence>
<reference key="1">
    <citation type="journal article" date="2000" name="Nature">
        <title>Complete genome sequence of Pseudomonas aeruginosa PAO1, an opportunistic pathogen.</title>
        <authorList>
            <person name="Stover C.K."/>
            <person name="Pham X.-Q.T."/>
            <person name="Erwin A.L."/>
            <person name="Mizoguchi S.D."/>
            <person name="Warrener P."/>
            <person name="Hickey M.J."/>
            <person name="Brinkman F.S.L."/>
            <person name="Hufnagle W.O."/>
            <person name="Kowalik D.J."/>
            <person name="Lagrou M."/>
            <person name="Garber R.L."/>
            <person name="Goltry L."/>
            <person name="Tolentino E."/>
            <person name="Westbrock-Wadman S."/>
            <person name="Yuan Y."/>
            <person name="Brody L.L."/>
            <person name="Coulter S.N."/>
            <person name="Folger K.R."/>
            <person name="Kas A."/>
            <person name="Larbig K."/>
            <person name="Lim R.M."/>
            <person name="Smith K.A."/>
            <person name="Spencer D.H."/>
            <person name="Wong G.K.-S."/>
            <person name="Wu Z."/>
            <person name="Paulsen I.T."/>
            <person name="Reizer J."/>
            <person name="Saier M.H. Jr."/>
            <person name="Hancock R.E.W."/>
            <person name="Lory S."/>
            <person name="Olson M.V."/>
        </authorList>
    </citation>
    <scope>NUCLEOTIDE SEQUENCE [LARGE SCALE GENOMIC DNA]</scope>
    <source>
        <strain>ATCC 15692 / DSM 22644 / CIP 104116 / JCM 14847 / LMG 12228 / 1C / PRS 101 / PAO1</strain>
    </source>
</reference>
<reference key="2">
    <citation type="journal article" date="2009" name="J. Mol. Biol.">
        <title>PilM/N/O/P proteins form an inner membrane complex that affects the stability of the Pseudomonas aeruginosa type IV pilus secretin.</title>
        <authorList>
            <person name="Ayers M."/>
            <person name="Sampaleanu L.M."/>
            <person name="Tammam S."/>
            <person name="Koo J."/>
            <person name="Harvey H."/>
            <person name="Howell P.L."/>
            <person name="Burrows L.L."/>
        </authorList>
    </citation>
    <scope>FUNCTION</scope>
    <scope>SUBCELLULAR LOCATION</scope>
    <scope>INTERACTION WITH PILM; PILN AND PILP</scope>
    <scope>DISRUPTION PHENOTYPE</scope>
</reference>
<reference key="3">
    <citation type="journal article" date="2009" name="J. Mol. Biol.">
        <title>Periplasmic domains of Pseudomonas aeruginosa PilN and PilO form a stable heterodimeric complex.</title>
        <authorList>
            <person name="Sampaleanu L.M."/>
            <person name="Bonanno J.B."/>
            <person name="Ayers M."/>
            <person name="Koo J."/>
            <person name="Tammam S."/>
            <person name="Burley S.K."/>
            <person name="Almo S.C."/>
            <person name="Burrows L.L."/>
            <person name="Howell P.L."/>
        </authorList>
    </citation>
    <scope>FUNCTION</scope>
    <scope>INTERACTION WITH PILN</scope>
</reference>
<reference key="4">
    <citation type="journal article" date="2015" name="J. Bacteriol.">
        <title>Novel Role for PilNO in Type IV Pilus Retraction Revealed by Alignment Subcomplex Mutations.</title>
        <authorList>
            <person name="Leighton T.L."/>
            <person name="Dayalani N."/>
            <person name="Sampaleanu L.M."/>
            <person name="Howell P.L."/>
            <person name="Burrows L.L."/>
        </authorList>
    </citation>
    <scope>INTERACTION WITH PILN</scope>
    <scope>MUTAGENESIS OF MET-92</scope>
</reference>
<gene>
    <name type="primary">pilO</name>
    <name type="ordered locus">PA5042</name>
</gene>
<comment type="function">
    <text evidence="2 3">Inner membrane component of the type IV (T4S) secretion system that plays a role in surface and host cell adhesion, colonization, biofilm maturation, virulence, and twitching, a form of surface-associated motility. PilN/PilO heterodimers form the foundation of the inner-membrane PilM/PilN/PilO/PilP complex which plays an essential role in the assembly of a functional T4 pilus.</text>
</comment>
<comment type="subunit">
    <text evidence="2 3 4">Interacts with PilN (PubMed:19857645, PubMed:19857646, PubMed:25917913). Interacts with PilP (via N-terminus) (PubMed:19857645). Interacts with PilM (PubMed:19857645).</text>
</comment>
<comment type="subcellular location">
    <subcellularLocation>
        <location evidence="2">Cell inner membrane</location>
        <topology evidence="1">Single-pass type II membrane protein</topology>
    </subcellularLocation>
</comment>
<comment type="disruption phenotype">
    <text evidence="2">Deletion mutants lack surface pili.</text>
</comment>
<protein>
    <recommendedName>
        <fullName evidence="5">Type IV pilus inner membrane component PilO</fullName>
    </recommendedName>
</protein>
<evidence type="ECO:0000255" key="1"/>
<evidence type="ECO:0000269" key="2">
    <source>
    </source>
</evidence>
<evidence type="ECO:0000269" key="3">
    <source>
    </source>
</evidence>
<evidence type="ECO:0000269" key="4">
    <source>
    </source>
</evidence>
<evidence type="ECO:0000303" key="5">
    <source>
    </source>
</evidence>
<proteinExistence type="evidence at protein level"/>
<name>PILO_PSEAE</name>
<organism>
    <name type="scientific">Pseudomonas aeruginosa (strain ATCC 15692 / DSM 22644 / CIP 104116 / JCM 14847 / LMG 12228 / 1C / PRS 101 / PAO1)</name>
    <dbReference type="NCBI Taxonomy" id="208964"/>
    <lineage>
        <taxon>Bacteria</taxon>
        <taxon>Pseudomonadati</taxon>
        <taxon>Pseudomonadota</taxon>
        <taxon>Gammaproteobacteria</taxon>
        <taxon>Pseudomonadales</taxon>
        <taxon>Pseudomonadaceae</taxon>
        <taxon>Pseudomonas</taxon>
    </lineage>
</organism>
<dbReference type="EMBL" id="AE004091">
    <property type="protein sequence ID" value="AAG08427.1"/>
    <property type="molecule type" value="Genomic_DNA"/>
</dbReference>
<dbReference type="PIR" id="S77728">
    <property type="entry name" value="S77728"/>
</dbReference>
<dbReference type="RefSeq" id="NP_253729.1">
    <property type="nucleotide sequence ID" value="NC_002516.2"/>
</dbReference>
<dbReference type="RefSeq" id="WP_003103268.1">
    <property type="nucleotide sequence ID" value="NZ_QZGE01000002.1"/>
</dbReference>
<dbReference type="SMR" id="G3XD51"/>
<dbReference type="STRING" id="208964.PA5042"/>
<dbReference type="PaxDb" id="208964-PA5042"/>
<dbReference type="DNASU" id="880985"/>
<dbReference type="GeneID" id="880985"/>
<dbReference type="KEGG" id="pae:PA5042"/>
<dbReference type="PATRIC" id="fig|208964.12.peg.5286"/>
<dbReference type="PseudoCAP" id="PA5042"/>
<dbReference type="HOGENOM" id="CLU_102444_1_0_6"/>
<dbReference type="InParanoid" id="G3XD51"/>
<dbReference type="OrthoDB" id="9802133at2"/>
<dbReference type="PhylomeDB" id="G3XD51"/>
<dbReference type="Proteomes" id="UP000002438">
    <property type="component" value="Chromosome"/>
</dbReference>
<dbReference type="GO" id="GO:0005886">
    <property type="term" value="C:plasma membrane"/>
    <property type="evidence" value="ECO:0007669"/>
    <property type="project" value="UniProtKB-SubCell"/>
</dbReference>
<dbReference type="GO" id="GO:0044096">
    <property type="term" value="C:type IV pilus"/>
    <property type="evidence" value="ECO:0000315"/>
    <property type="project" value="PseudoCAP"/>
</dbReference>
<dbReference type="GO" id="GO:0043683">
    <property type="term" value="P:type IV pilus assembly"/>
    <property type="evidence" value="ECO:0000315"/>
    <property type="project" value="PseudoCAP"/>
</dbReference>
<dbReference type="GO" id="GO:0043107">
    <property type="term" value="P:type IV pilus-dependent motility"/>
    <property type="evidence" value="ECO:0000315"/>
    <property type="project" value="PseudoCAP"/>
</dbReference>
<dbReference type="FunFam" id="3.30.70.60:FF:000005">
    <property type="entry name" value="Pilus assembly protein, PilO"/>
    <property type="match status" value="1"/>
</dbReference>
<dbReference type="FunFam" id="1.10.287.540:FF:000001">
    <property type="entry name" value="Type IV pilus assembly protein PilO"/>
    <property type="match status" value="1"/>
</dbReference>
<dbReference type="Gene3D" id="3.30.70.60">
    <property type="match status" value="1"/>
</dbReference>
<dbReference type="Gene3D" id="1.10.287.540">
    <property type="entry name" value="Helix hairpin bin"/>
    <property type="match status" value="1"/>
</dbReference>
<dbReference type="InterPro" id="IPR007445">
    <property type="entry name" value="PilO"/>
</dbReference>
<dbReference type="InterPro" id="IPR014717">
    <property type="entry name" value="Transl_elong_EF1B/ribsomal_bS6"/>
</dbReference>
<dbReference type="PANTHER" id="PTHR39555">
    <property type="entry name" value="FIMBRIAL ASSEMBLY PROTEIN PILO-LIKE PROTEIN-RELATED"/>
    <property type="match status" value="1"/>
</dbReference>
<dbReference type="PANTHER" id="PTHR39555:SF1">
    <property type="entry name" value="TYPE IV PILUS INNER MEMBRANE COMPONENT PILO"/>
    <property type="match status" value="1"/>
</dbReference>
<dbReference type="Pfam" id="PF04350">
    <property type="entry name" value="PilO"/>
    <property type="match status" value="1"/>
</dbReference>
<dbReference type="PIRSF" id="PIRSF016482">
    <property type="entry name" value="PilO"/>
    <property type="match status" value="1"/>
</dbReference>
<accession>G3XD51</accession>
<keyword id="KW-0997">Cell inner membrane</keyword>
<keyword id="KW-1003">Cell membrane</keyword>
<keyword id="KW-0472">Membrane</keyword>
<keyword id="KW-1185">Reference proteome</keyword>
<keyword id="KW-0812">Transmembrane</keyword>
<keyword id="KW-1133">Transmembrane helix</keyword>
<feature type="chain" id="PRO_0000450558" description="Type IV pilus inner membrane component PilO">
    <location>
        <begin position="1"/>
        <end position="207"/>
    </location>
</feature>
<feature type="transmembrane region" description="Helical" evidence="1">
    <location>
        <begin position="26"/>
        <end position="46"/>
    </location>
</feature>
<feature type="mutagenesis site" description="Reduced twitching motility and hyperpiliated surface pili." evidence="4">
    <original>M</original>
    <variation>K</variation>
    <location>
        <position position="92"/>
    </location>
</feature>